<name>UREF_BURM1</name>
<organism>
    <name type="scientific">Burkholderia multivorans (strain ATCC 17616 / 249)</name>
    <dbReference type="NCBI Taxonomy" id="395019"/>
    <lineage>
        <taxon>Bacteria</taxon>
        <taxon>Pseudomonadati</taxon>
        <taxon>Pseudomonadota</taxon>
        <taxon>Betaproteobacteria</taxon>
        <taxon>Burkholderiales</taxon>
        <taxon>Burkholderiaceae</taxon>
        <taxon>Burkholderia</taxon>
        <taxon>Burkholderia cepacia complex</taxon>
    </lineage>
</organism>
<evidence type="ECO:0000255" key="1">
    <source>
        <dbReference type="HAMAP-Rule" id="MF_01385"/>
    </source>
</evidence>
<gene>
    <name evidence="1" type="primary">ureF</name>
    <name type="ordered locus">Bmul_2492</name>
    <name type="ordered locus">BMULJ_00744</name>
</gene>
<reference key="1">
    <citation type="submission" date="2007-10" db="EMBL/GenBank/DDBJ databases">
        <title>Complete sequence of chromosome 1 of Burkholderia multivorans ATCC 17616.</title>
        <authorList>
            <person name="Copeland A."/>
            <person name="Lucas S."/>
            <person name="Lapidus A."/>
            <person name="Barry K."/>
            <person name="Glavina del Rio T."/>
            <person name="Dalin E."/>
            <person name="Tice H."/>
            <person name="Pitluck S."/>
            <person name="Chain P."/>
            <person name="Malfatti S."/>
            <person name="Shin M."/>
            <person name="Vergez L."/>
            <person name="Schmutz J."/>
            <person name="Larimer F."/>
            <person name="Land M."/>
            <person name="Hauser L."/>
            <person name="Kyrpides N."/>
            <person name="Kim E."/>
            <person name="Tiedje J."/>
            <person name="Richardson P."/>
        </authorList>
    </citation>
    <scope>NUCLEOTIDE SEQUENCE [LARGE SCALE GENOMIC DNA]</scope>
    <source>
        <strain>ATCC 17616 / 249</strain>
    </source>
</reference>
<reference key="2">
    <citation type="submission" date="2007-04" db="EMBL/GenBank/DDBJ databases">
        <title>Complete genome sequence of Burkholderia multivorans ATCC 17616.</title>
        <authorList>
            <person name="Ohtsubo Y."/>
            <person name="Yamashita A."/>
            <person name="Kurokawa K."/>
            <person name="Takami H."/>
            <person name="Yuhara S."/>
            <person name="Nishiyama E."/>
            <person name="Endo R."/>
            <person name="Miyazaki R."/>
            <person name="Ono A."/>
            <person name="Yano K."/>
            <person name="Ito M."/>
            <person name="Sota M."/>
            <person name="Yuji N."/>
            <person name="Hattori M."/>
            <person name="Tsuda M."/>
        </authorList>
    </citation>
    <scope>NUCLEOTIDE SEQUENCE [LARGE SCALE GENOMIC DNA]</scope>
    <source>
        <strain>ATCC 17616 / 249</strain>
    </source>
</reference>
<dbReference type="EMBL" id="CP000868">
    <property type="protein sequence ID" value="ABX16176.1"/>
    <property type="molecule type" value="Genomic_DNA"/>
</dbReference>
<dbReference type="EMBL" id="AP009385">
    <property type="protein sequence ID" value="BAG42705.1"/>
    <property type="molecule type" value="Genomic_DNA"/>
</dbReference>
<dbReference type="RefSeq" id="WP_012213978.1">
    <property type="nucleotide sequence ID" value="NC_010084.1"/>
</dbReference>
<dbReference type="SMR" id="A9AF74"/>
<dbReference type="STRING" id="395019.BMULJ_00744"/>
<dbReference type="KEGG" id="bmj:BMULJ_00744"/>
<dbReference type="KEGG" id="bmu:Bmul_2492"/>
<dbReference type="eggNOG" id="COG0830">
    <property type="taxonomic scope" value="Bacteria"/>
</dbReference>
<dbReference type="HOGENOM" id="CLU_049215_2_1_4"/>
<dbReference type="Proteomes" id="UP000008815">
    <property type="component" value="Chromosome 1"/>
</dbReference>
<dbReference type="GO" id="GO:0005737">
    <property type="term" value="C:cytoplasm"/>
    <property type="evidence" value="ECO:0007669"/>
    <property type="project" value="UniProtKB-SubCell"/>
</dbReference>
<dbReference type="GO" id="GO:0016151">
    <property type="term" value="F:nickel cation binding"/>
    <property type="evidence" value="ECO:0007669"/>
    <property type="project" value="UniProtKB-UniRule"/>
</dbReference>
<dbReference type="Gene3D" id="1.10.4190.10">
    <property type="entry name" value="Urease accessory protein UreF"/>
    <property type="match status" value="1"/>
</dbReference>
<dbReference type="HAMAP" id="MF_01385">
    <property type="entry name" value="UreF"/>
    <property type="match status" value="1"/>
</dbReference>
<dbReference type="InterPro" id="IPR002639">
    <property type="entry name" value="UreF"/>
</dbReference>
<dbReference type="InterPro" id="IPR038277">
    <property type="entry name" value="UreF_sf"/>
</dbReference>
<dbReference type="PANTHER" id="PTHR33620">
    <property type="entry name" value="UREASE ACCESSORY PROTEIN F"/>
    <property type="match status" value="1"/>
</dbReference>
<dbReference type="PANTHER" id="PTHR33620:SF1">
    <property type="entry name" value="UREASE ACCESSORY PROTEIN F"/>
    <property type="match status" value="1"/>
</dbReference>
<dbReference type="Pfam" id="PF01730">
    <property type="entry name" value="UreF"/>
    <property type="match status" value="1"/>
</dbReference>
<dbReference type="PIRSF" id="PIRSF009467">
    <property type="entry name" value="Ureas_acces_UreF"/>
    <property type="match status" value="1"/>
</dbReference>
<protein>
    <recommendedName>
        <fullName evidence="1">Urease accessory protein UreF</fullName>
    </recommendedName>
</protein>
<comment type="function">
    <text evidence="1">Required for maturation of urease via the functional incorporation of the urease nickel metallocenter.</text>
</comment>
<comment type="subunit">
    <text evidence="1">UreD, UreF and UreG form a complex that acts as a GTP-hydrolysis-dependent molecular chaperone, activating the urease apoprotein by helping to assemble the nickel containing metallocenter of UreC. The UreE protein probably delivers the nickel.</text>
</comment>
<comment type="subcellular location">
    <subcellularLocation>
        <location evidence="1">Cytoplasm</location>
    </subcellularLocation>
</comment>
<comment type="similarity">
    <text evidence="1">Belongs to the UreF family.</text>
</comment>
<sequence length="226" mass="23988">MTTTELVALLHLASPALPIGAFSYSQGLEAALDANLIHDADSARNWIASGLTDVLAHGELPFLAHQLARWQAHDAPALAAENAWFVASRESSELRRETEQMGWSLAQLCASLEWGDAARRATLASLQPIALPTAFAYAAAAHDAGADAVLAAYAFGWVENQTAAALKAVPLGQLAGQRIIVALRDAIDAAVRRALATPADAVNTFAPQLGILSARHETQYSRLFRS</sequence>
<keyword id="KW-0143">Chaperone</keyword>
<keyword id="KW-0963">Cytoplasm</keyword>
<keyword id="KW-0996">Nickel insertion</keyword>
<keyword id="KW-1185">Reference proteome</keyword>
<accession>A9AF74</accession>
<feature type="chain" id="PRO_0000344104" description="Urease accessory protein UreF">
    <location>
        <begin position="1"/>
        <end position="226"/>
    </location>
</feature>
<proteinExistence type="inferred from homology"/>